<comment type="function">
    <text evidence="1">Catalyzes the conversion of inosine 5'-phosphate (IMP) to xanthosine 5'-phosphate (XMP), the first committed and rate-limiting step in the de novo synthesis of guanine nucleotides, and therefore plays an important role in the regulation of cell growth.</text>
</comment>
<comment type="catalytic activity">
    <reaction evidence="1">
        <text>IMP + NAD(+) + H2O = XMP + NADH + H(+)</text>
        <dbReference type="Rhea" id="RHEA:11708"/>
        <dbReference type="ChEBI" id="CHEBI:15377"/>
        <dbReference type="ChEBI" id="CHEBI:15378"/>
        <dbReference type="ChEBI" id="CHEBI:57464"/>
        <dbReference type="ChEBI" id="CHEBI:57540"/>
        <dbReference type="ChEBI" id="CHEBI:57945"/>
        <dbReference type="ChEBI" id="CHEBI:58053"/>
        <dbReference type="EC" id="1.1.1.205"/>
    </reaction>
</comment>
<comment type="cofactor">
    <cofactor evidence="1">
        <name>K(+)</name>
        <dbReference type="ChEBI" id="CHEBI:29103"/>
    </cofactor>
</comment>
<comment type="activity regulation">
    <text evidence="1">Mycophenolic acid (MPA) is a non-competitive inhibitor that prevents formation of the closed enzyme conformation by binding to the same site as the amobile flap. In contrast, mizoribine monophosphate (MZP) is a competitive inhibitor that induces the closed conformation. MPA is a potent inhibitor of mammalian IMPDHs but a poor inhibitor of the bacterial enzymes. MZP is a more potent inhibitor of bacterial IMPDH.</text>
</comment>
<comment type="pathway">
    <text evidence="1">Purine metabolism; XMP biosynthesis via de novo pathway; XMP from IMP: step 1/1.</text>
</comment>
<comment type="subunit">
    <text evidence="1">Homotetramer.</text>
</comment>
<comment type="subcellular location">
    <subcellularLocation>
        <location evidence="1">Cytoplasm</location>
    </subcellularLocation>
</comment>
<comment type="similarity">
    <text evidence="1">Belongs to the IMPDH/GMPR family.</text>
</comment>
<feature type="chain" id="PRO_0000415680" description="Inosine-5'-monophosphate dehydrogenase">
    <location>
        <begin position="1"/>
        <end position="534"/>
    </location>
</feature>
<feature type="domain" description="CBS 1" evidence="1">
    <location>
        <begin position="117"/>
        <end position="181"/>
    </location>
</feature>
<feature type="domain" description="CBS 2" evidence="1">
    <location>
        <begin position="190"/>
        <end position="255"/>
    </location>
</feature>
<feature type="active site" description="Thioimidate intermediate" evidence="1">
    <location>
        <position position="349"/>
    </location>
</feature>
<feature type="active site" description="Proton acceptor" evidence="1">
    <location>
        <position position="448"/>
    </location>
</feature>
<feature type="binding site" evidence="1">
    <location>
        <begin position="292"/>
        <end position="294"/>
    </location>
    <ligand>
        <name>NAD(+)</name>
        <dbReference type="ChEBI" id="CHEBI:57540"/>
    </ligand>
</feature>
<feature type="binding site" evidence="1">
    <location>
        <begin position="342"/>
        <end position="344"/>
    </location>
    <ligand>
        <name>NAD(+)</name>
        <dbReference type="ChEBI" id="CHEBI:57540"/>
    </ligand>
</feature>
<feature type="binding site" description="in other chain" evidence="1">
    <location>
        <position position="344"/>
    </location>
    <ligand>
        <name>K(+)</name>
        <dbReference type="ChEBI" id="CHEBI:29103"/>
        <note>ligand shared between two tetrameric partners</note>
    </ligand>
</feature>
<feature type="binding site" description="in other chain" evidence="1">
    <location>
        <position position="346"/>
    </location>
    <ligand>
        <name>K(+)</name>
        <dbReference type="ChEBI" id="CHEBI:29103"/>
        <note>ligand shared between two tetrameric partners</note>
    </ligand>
</feature>
<feature type="binding site" evidence="1">
    <location>
        <position position="347"/>
    </location>
    <ligand>
        <name>IMP</name>
        <dbReference type="ChEBI" id="CHEBI:58053"/>
    </ligand>
</feature>
<feature type="binding site" description="in other chain" evidence="1">
    <location>
        <position position="349"/>
    </location>
    <ligand>
        <name>K(+)</name>
        <dbReference type="ChEBI" id="CHEBI:29103"/>
        <note>ligand shared between two tetrameric partners</note>
    </ligand>
</feature>
<feature type="binding site" evidence="1">
    <location>
        <begin position="382"/>
        <end position="384"/>
    </location>
    <ligand>
        <name>IMP</name>
        <dbReference type="ChEBI" id="CHEBI:58053"/>
    </ligand>
</feature>
<feature type="binding site" evidence="1">
    <location>
        <begin position="405"/>
        <end position="406"/>
    </location>
    <ligand>
        <name>IMP</name>
        <dbReference type="ChEBI" id="CHEBI:58053"/>
    </ligand>
</feature>
<feature type="binding site" evidence="1">
    <location>
        <begin position="430"/>
        <end position="434"/>
    </location>
    <ligand>
        <name>IMP</name>
        <dbReference type="ChEBI" id="CHEBI:58053"/>
    </ligand>
</feature>
<feature type="binding site" evidence="1">
    <location>
        <position position="461"/>
    </location>
    <ligand>
        <name>IMP</name>
        <dbReference type="ChEBI" id="CHEBI:58053"/>
    </ligand>
</feature>
<feature type="binding site" evidence="1">
    <location>
        <position position="520"/>
    </location>
    <ligand>
        <name>K(+)</name>
        <dbReference type="ChEBI" id="CHEBI:29103"/>
        <note>ligand shared between two tetrameric partners</note>
    </ligand>
</feature>
<feature type="binding site" evidence="1">
    <location>
        <position position="521"/>
    </location>
    <ligand>
        <name>K(+)</name>
        <dbReference type="ChEBI" id="CHEBI:29103"/>
        <note>ligand shared between two tetrameric partners</note>
    </ligand>
</feature>
<feature type="binding site" evidence="1">
    <location>
        <position position="522"/>
    </location>
    <ligand>
        <name>K(+)</name>
        <dbReference type="ChEBI" id="CHEBI:29103"/>
        <note>ligand shared between two tetrameric partners</note>
    </ligand>
</feature>
<sequence length="534" mass="58170">MVRPEDFNSLELDNSLTDGETVHEMMAHKAGLTYNDFNILPGFINFGVHDVSLETNITKDLKIKAPLVSSPMDTVTESGMAIVMALYGGIGIIHGNFPKPEDQAAEVLKVKRFKQGYVMQPHCLSRDSTAFDMIQIKKKYGYTGAPVTEDGRVGSKLIGMVTSRDFDFITMDVAGQKGTPISDTNDVTPTTPITRIMVSVDQLHLGHINDAPELSQKKLKEHRLGKLPIVNDNGELCALLCRSDLLKARDYPMASYDSKGQLLCGAAVNTRGESQYTVDRVVEAGVDVLIIDSSNGSSTYQISMLRYIKEKHPHVQVIAGNVVTRAQAKLLIDQGADGLRIGMGSGSICITQDVMAVGRAQGTAVYDVARYANQRGIPIVADGGIRDVGYITKAISLGASAVMMGGLLAATTEAPGEYFWGPGGVRVKKYRGMGSLDAMEAHASSQDRYFTAESDQIKVAQGVSATMKDRGSCHKFIPYLIRGVQHGMQDIGVRSLRDFREKVDNGIVKFERRSTNAQLEGGVHSLHSFEKRLY</sequence>
<gene>
    <name type="ORF">T22D1.3</name>
</gene>
<organism>
    <name type="scientific">Caenorhabditis elegans</name>
    <dbReference type="NCBI Taxonomy" id="6239"/>
    <lineage>
        <taxon>Eukaryota</taxon>
        <taxon>Metazoa</taxon>
        <taxon>Ecdysozoa</taxon>
        <taxon>Nematoda</taxon>
        <taxon>Chromadorea</taxon>
        <taxon>Rhabditida</taxon>
        <taxon>Rhabditina</taxon>
        <taxon>Rhabditomorpha</taxon>
        <taxon>Rhabditoidea</taxon>
        <taxon>Rhabditidae</taxon>
        <taxon>Peloderinae</taxon>
        <taxon>Caenorhabditis</taxon>
    </lineage>
</organism>
<reference key="1">
    <citation type="journal article" date="1998" name="Science">
        <title>Genome sequence of the nematode C. elegans: a platform for investigating biology.</title>
        <authorList>
            <consortium name="The C. elegans sequencing consortium"/>
        </authorList>
    </citation>
    <scope>NUCLEOTIDE SEQUENCE [LARGE SCALE GENOMIC DNA]</scope>
    <source>
        <strain>Bristol N2</strain>
    </source>
</reference>
<accession>Q9GZH3</accession>
<keyword id="KW-0129">CBS domain</keyword>
<keyword id="KW-0963">Cytoplasm</keyword>
<keyword id="KW-0332">GMP biosynthesis</keyword>
<keyword id="KW-0479">Metal-binding</keyword>
<keyword id="KW-0520">NAD</keyword>
<keyword id="KW-0560">Oxidoreductase</keyword>
<keyword id="KW-0630">Potassium</keyword>
<keyword id="KW-0658">Purine biosynthesis</keyword>
<keyword id="KW-1185">Reference proteome</keyword>
<keyword id="KW-0677">Repeat</keyword>
<dbReference type="EC" id="1.1.1.205" evidence="1"/>
<dbReference type="EMBL" id="FO080211">
    <property type="protein sequence ID" value="CCD62017.1"/>
    <property type="molecule type" value="Genomic_DNA"/>
</dbReference>
<dbReference type="RefSeq" id="NP_001023395.1">
    <property type="nucleotide sequence ID" value="NM_001028224.4"/>
</dbReference>
<dbReference type="SMR" id="Q9GZH3"/>
<dbReference type="BioGRID" id="42577">
    <property type="interactions" value="12"/>
</dbReference>
<dbReference type="FunCoup" id="Q9GZH3">
    <property type="interactions" value="1667"/>
</dbReference>
<dbReference type="IntAct" id="Q9GZH3">
    <property type="interactions" value="1"/>
</dbReference>
<dbReference type="STRING" id="6239.T22D1.3a.1"/>
<dbReference type="PaxDb" id="6239-T22D1.3a"/>
<dbReference type="PeptideAtlas" id="Q9GZH3"/>
<dbReference type="EnsemblMetazoa" id="T22D1.3a.1">
    <property type="protein sequence ID" value="T22D1.3a.1"/>
    <property type="gene ID" value="WBGene00020682"/>
</dbReference>
<dbReference type="GeneID" id="177457"/>
<dbReference type="KEGG" id="cel:CELE_T22D1.3"/>
<dbReference type="UCSC" id="T22D1.3b.1">
    <property type="organism name" value="c. elegans"/>
</dbReference>
<dbReference type="AGR" id="WB:WBGene00020682"/>
<dbReference type="CTD" id="177457"/>
<dbReference type="WormBase" id="T22D1.3a">
    <property type="protein sequence ID" value="CE30188"/>
    <property type="gene ID" value="WBGene00020682"/>
</dbReference>
<dbReference type="eggNOG" id="KOG2550">
    <property type="taxonomic scope" value="Eukaryota"/>
</dbReference>
<dbReference type="InParanoid" id="Q9GZH3"/>
<dbReference type="OMA" id="MGYCGAK"/>
<dbReference type="OrthoDB" id="416622at2759"/>
<dbReference type="PhylomeDB" id="Q9GZH3"/>
<dbReference type="Reactome" id="R-CEL-6798695">
    <property type="pathway name" value="Neutrophil degranulation"/>
</dbReference>
<dbReference type="Reactome" id="R-CEL-73817">
    <property type="pathway name" value="Purine ribonucleoside monophosphate biosynthesis"/>
</dbReference>
<dbReference type="Reactome" id="R-CEL-9748787">
    <property type="pathway name" value="Azathioprine ADME"/>
</dbReference>
<dbReference type="UniPathway" id="UPA00601">
    <property type="reaction ID" value="UER00295"/>
</dbReference>
<dbReference type="PRO" id="PR:Q9GZH3"/>
<dbReference type="Proteomes" id="UP000001940">
    <property type="component" value="Chromosome IV"/>
</dbReference>
<dbReference type="Bgee" id="WBGene00020682">
    <property type="expression patterns" value="Expressed in larva and 4 other cell types or tissues"/>
</dbReference>
<dbReference type="ExpressionAtlas" id="Q9GZH3">
    <property type="expression patterns" value="baseline and differential"/>
</dbReference>
<dbReference type="GO" id="GO:0005737">
    <property type="term" value="C:cytoplasm"/>
    <property type="evidence" value="ECO:0000318"/>
    <property type="project" value="GO_Central"/>
</dbReference>
<dbReference type="GO" id="GO:0003938">
    <property type="term" value="F:IMP dehydrogenase activity"/>
    <property type="evidence" value="ECO:0000318"/>
    <property type="project" value="GO_Central"/>
</dbReference>
<dbReference type="GO" id="GO:0046872">
    <property type="term" value="F:metal ion binding"/>
    <property type="evidence" value="ECO:0007669"/>
    <property type="project" value="UniProtKB-UniRule"/>
</dbReference>
<dbReference type="GO" id="GO:0000166">
    <property type="term" value="F:nucleotide binding"/>
    <property type="evidence" value="ECO:0007669"/>
    <property type="project" value="UniProtKB-UniRule"/>
</dbReference>
<dbReference type="GO" id="GO:0006177">
    <property type="term" value="P:GMP biosynthetic process"/>
    <property type="evidence" value="ECO:0007669"/>
    <property type="project" value="UniProtKB-UniRule"/>
</dbReference>
<dbReference type="GO" id="GO:0006183">
    <property type="term" value="P:GTP biosynthetic process"/>
    <property type="evidence" value="ECO:0000318"/>
    <property type="project" value="GO_Central"/>
</dbReference>
<dbReference type="CDD" id="cd04601">
    <property type="entry name" value="CBS_pair_IMPDH"/>
    <property type="match status" value="1"/>
</dbReference>
<dbReference type="CDD" id="cd00381">
    <property type="entry name" value="IMPDH"/>
    <property type="match status" value="1"/>
</dbReference>
<dbReference type="FunFam" id="3.20.20.70:FF:000086">
    <property type="entry name" value="IMP dehydrogenase, putative"/>
    <property type="match status" value="1"/>
</dbReference>
<dbReference type="Gene3D" id="3.20.20.70">
    <property type="entry name" value="Aldolase class I"/>
    <property type="match status" value="1"/>
</dbReference>
<dbReference type="HAMAP" id="MF_01964">
    <property type="entry name" value="IMPDH"/>
    <property type="match status" value="1"/>
</dbReference>
<dbReference type="InterPro" id="IPR013785">
    <property type="entry name" value="Aldolase_TIM"/>
</dbReference>
<dbReference type="InterPro" id="IPR000644">
    <property type="entry name" value="CBS_dom"/>
</dbReference>
<dbReference type="InterPro" id="IPR005990">
    <property type="entry name" value="IMP_DH"/>
</dbReference>
<dbReference type="InterPro" id="IPR015875">
    <property type="entry name" value="IMP_DH/GMP_Rdtase_CS"/>
</dbReference>
<dbReference type="InterPro" id="IPR001093">
    <property type="entry name" value="IMP_DH_GMPRt"/>
</dbReference>
<dbReference type="NCBIfam" id="TIGR01302">
    <property type="entry name" value="IMP_dehydrog"/>
    <property type="match status" value="1"/>
</dbReference>
<dbReference type="PANTHER" id="PTHR11911:SF111">
    <property type="entry name" value="INOSINE-5'-MONOPHOSPHATE DEHYDROGENASE"/>
    <property type="match status" value="1"/>
</dbReference>
<dbReference type="PANTHER" id="PTHR11911">
    <property type="entry name" value="INOSINE-5-MONOPHOSPHATE DEHYDROGENASE RELATED"/>
    <property type="match status" value="1"/>
</dbReference>
<dbReference type="Pfam" id="PF00571">
    <property type="entry name" value="CBS"/>
    <property type="match status" value="2"/>
</dbReference>
<dbReference type="Pfam" id="PF00478">
    <property type="entry name" value="IMPDH"/>
    <property type="match status" value="1"/>
</dbReference>
<dbReference type="PIRSF" id="PIRSF000130">
    <property type="entry name" value="IMPDH"/>
    <property type="match status" value="1"/>
</dbReference>
<dbReference type="SMART" id="SM00116">
    <property type="entry name" value="CBS"/>
    <property type="match status" value="2"/>
</dbReference>
<dbReference type="SMART" id="SM01240">
    <property type="entry name" value="IMPDH"/>
    <property type="match status" value="1"/>
</dbReference>
<dbReference type="SUPFAM" id="SSF51412">
    <property type="entry name" value="Inosine monophosphate dehydrogenase (IMPDH)"/>
    <property type="match status" value="2"/>
</dbReference>
<dbReference type="PROSITE" id="PS51371">
    <property type="entry name" value="CBS"/>
    <property type="match status" value="2"/>
</dbReference>
<dbReference type="PROSITE" id="PS00487">
    <property type="entry name" value="IMP_DH_GMP_RED"/>
    <property type="match status" value="1"/>
</dbReference>
<protein>
    <recommendedName>
        <fullName evidence="1">Inosine-5'-monophosphate dehydrogenase</fullName>
        <shortName evidence="1">IMP dehydrogenase</shortName>
        <shortName evidence="1">IMPD</shortName>
        <shortName evidence="1">IMPDH</shortName>
        <ecNumber evidence="1">1.1.1.205</ecNumber>
    </recommendedName>
</protein>
<evidence type="ECO:0000255" key="1">
    <source>
        <dbReference type="HAMAP-Rule" id="MF_03156"/>
    </source>
</evidence>
<proteinExistence type="inferred from homology"/>
<name>IMDH_CAEEL</name>